<sequence length="303" mass="34716">MQKFDTRTFQGLILTLQDYWARQGCTIVQPLDMEVGAGTSHPMTCLRALGPEPMAAAYVQPSRRPTDGRYGENPNRLQHYYQFQVVIKPSPDNIQELYLGSLKELGMDPTIHDIRFVEDNWENPTLGAWGLGWEVWLNGMEVTQFTYFQQVGGLECKPVTGEITYGLERLAMYIQGVDSVYDLVWSDGPLGKTTYGDVFHQNEVEQSTYNFEYADVDFLFTCFEQYEKEAQQLLALENPLPLPAYERILKAAHSFNLLDARKAISVTERQRYILRIRTLTKAVAEAYYASREALGFPMCNKDK</sequence>
<comment type="catalytic activity">
    <reaction evidence="1">
        <text>tRNA(Gly) + glycine + ATP = glycyl-tRNA(Gly) + AMP + diphosphate</text>
        <dbReference type="Rhea" id="RHEA:16013"/>
        <dbReference type="Rhea" id="RHEA-COMP:9664"/>
        <dbReference type="Rhea" id="RHEA-COMP:9683"/>
        <dbReference type="ChEBI" id="CHEBI:30616"/>
        <dbReference type="ChEBI" id="CHEBI:33019"/>
        <dbReference type="ChEBI" id="CHEBI:57305"/>
        <dbReference type="ChEBI" id="CHEBI:78442"/>
        <dbReference type="ChEBI" id="CHEBI:78522"/>
        <dbReference type="ChEBI" id="CHEBI:456215"/>
        <dbReference type="EC" id="6.1.1.14"/>
    </reaction>
</comment>
<comment type="subunit">
    <text evidence="1">Tetramer of two alpha and two beta subunits.</text>
</comment>
<comment type="subcellular location">
    <subcellularLocation>
        <location evidence="1">Cytoplasm</location>
    </subcellularLocation>
</comment>
<comment type="similarity">
    <text evidence="1">Belongs to the class-II aminoacyl-tRNA synthetase family.</text>
</comment>
<proteinExistence type="inferred from homology"/>
<feature type="chain" id="PRO_1000204587" description="Glycine--tRNA ligase alpha subunit">
    <location>
        <begin position="1"/>
        <end position="303"/>
    </location>
</feature>
<evidence type="ECO:0000255" key="1">
    <source>
        <dbReference type="HAMAP-Rule" id="MF_00254"/>
    </source>
</evidence>
<name>SYGA_ECOBW</name>
<accession>C4ZXF0</accession>
<protein>
    <recommendedName>
        <fullName evidence="1">Glycine--tRNA ligase alpha subunit</fullName>
        <ecNumber evidence="1">6.1.1.14</ecNumber>
    </recommendedName>
    <alternativeName>
        <fullName evidence="1">Glycyl-tRNA synthetase alpha subunit</fullName>
        <shortName evidence="1">GlyRS</shortName>
    </alternativeName>
</protein>
<gene>
    <name evidence="1" type="primary">glyQ</name>
    <name type="ordered locus">BWG_3249</name>
</gene>
<dbReference type="EC" id="6.1.1.14" evidence="1"/>
<dbReference type="EMBL" id="CP001396">
    <property type="protein sequence ID" value="ACR63370.1"/>
    <property type="molecule type" value="Genomic_DNA"/>
</dbReference>
<dbReference type="RefSeq" id="WP_001168544.1">
    <property type="nucleotide sequence ID" value="NC_012759.1"/>
</dbReference>
<dbReference type="SMR" id="C4ZXF0"/>
<dbReference type="GeneID" id="93778290"/>
<dbReference type="KEGG" id="ebw:BWG_3249"/>
<dbReference type="HOGENOM" id="CLU_057066_1_0_6"/>
<dbReference type="GO" id="GO:0005829">
    <property type="term" value="C:cytosol"/>
    <property type="evidence" value="ECO:0007669"/>
    <property type="project" value="TreeGrafter"/>
</dbReference>
<dbReference type="GO" id="GO:0005524">
    <property type="term" value="F:ATP binding"/>
    <property type="evidence" value="ECO:0007669"/>
    <property type="project" value="UniProtKB-UniRule"/>
</dbReference>
<dbReference type="GO" id="GO:0004820">
    <property type="term" value="F:glycine-tRNA ligase activity"/>
    <property type="evidence" value="ECO:0007669"/>
    <property type="project" value="UniProtKB-UniRule"/>
</dbReference>
<dbReference type="GO" id="GO:0006426">
    <property type="term" value="P:glycyl-tRNA aminoacylation"/>
    <property type="evidence" value="ECO:0007669"/>
    <property type="project" value="UniProtKB-UniRule"/>
</dbReference>
<dbReference type="CDD" id="cd00733">
    <property type="entry name" value="GlyRS_alpha_core"/>
    <property type="match status" value="1"/>
</dbReference>
<dbReference type="FunFam" id="1.20.58.180:FF:000001">
    <property type="entry name" value="Glycine--tRNA ligase alpha subunit"/>
    <property type="match status" value="1"/>
</dbReference>
<dbReference type="FunFam" id="3.30.930.10:FF:000006">
    <property type="entry name" value="Glycine--tRNA ligase alpha subunit"/>
    <property type="match status" value="1"/>
</dbReference>
<dbReference type="Gene3D" id="3.30.930.10">
    <property type="entry name" value="Bira Bifunctional Protein, Domain 2"/>
    <property type="match status" value="1"/>
</dbReference>
<dbReference type="Gene3D" id="1.20.58.180">
    <property type="entry name" value="Class II aaRS and biotin synthetases, domain 2"/>
    <property type="match status" value="1"/>
</dbReference>
<dbReference type="HAMAP" id="MF_00254">
    <property type="entry name" value="Gly_tRNA_synth_alpha"/>
    <property type="match status" value="1"/>
</dbReference>
<dbReference type="InterPro" id="IPR045864">
    <property type="entry name" value="aa-tRNA-synth_II/BPL/LPL"/>
</dbReference>
<dbReference type="InterPro" id="IPR006194">
    <property type="entry name" value="Gly-tRNA-synth_heterodimer"/>
</dbReference>
<dbReference type="InterPro" id="IPR002310">
    <property type="entry name" value="Gly-tRNA_ligase_asu"/>
</dbReference>
<dbReference type="NCBIfam" id="TIGR00388">
    <property type="entry name" value="glyQ"/>
    <property type="match status" value="1"/>
</dbReference>
<dbReference type="NCBIfam" id="NF006827">
    <property type="entry name" value="PRK09348.1"/>
    <property type="match status" value="1"/>
</dbReference>
<dbReference type="PANTHER" id="PTHR30075:SF2">
    <property type="entry name" value="GLYCINE--TRNA LIGASE, CHLOROPLASTIC_MITOCHONDRIAL 2"/>
    <property type="match status" value="1"/>
</dbReference>
<dbReference type="PANTHER" id="PTHR30075">
    <property type="entry name" value="GLYCYL-TRNA SYNTHETASE"/>
    <property type="match status" value="1"/>
</dbReference>
<dbReference type="Pfam" id="PF02091">
    <property type="entry name" value="tRNA-synt_2e"/>
    <property type="match status" value="1"/>
</dbReference>
<dbReference type="PRINTS" id="PR01044">
    <property type="entry name" value="TRNASYNTHGA"/>
</dbReference>
<dbReference type="SUPFAM" id="SSF55681">
    <property type="entry name" value="Class II aaRS and biotin synthetases"/>
    <property type="match status" value="1"/>
</dbReference>
<dbReference type="PROSITE" id="PS50861">
    <property type="entry name" value="AA_TRNA_LIGASE_II_GLYAB"/>
    <property type="match status" value="1"/>
</dbReference>
<organism>
    <name type="scientific">Escherichia coli (strain K12 / MC4100 / BW2952)</name>
    <dbReference type="NCBI Taxonomy" id="595496"/>
    <lineage>
        <taxon>Bacteria</taxon>
        <taxon>Pseudomonadati</taxon>
        <taxon>Pseudomonadota</taxon>
        <taxon>Gammaproteobacteria</taxon>
        <taxon>Enterobacterales</taxon>
        <taxon>Enterobacteriaceae</taxon>
        <taxon>Escherichia</taxon>
    </lineage>
</organism>
<keyword id="KW-0030">Aminoacyl-tRNA synthetase</keyword>
<keyword id="KW-0067">ATP-binding</keyword>
<keyword id="KW-0963">Cytoplasm</keyword>
<keyword id="KW-0436">Ligase</keyword>
<keyword id="KW-0547">Nucleotide-binding</keyword>
<keyword id="KW-0648">Protein biosynthesis</keyword>
<reference key="1">
    <citation type="journal article" date="2009" name="J. Bacteriol.">
        <title>Genomic sequencing reveals regulatory mutations and recombinational events in the widely used MC4100 lineage of Escherichia coli K-12.</title>
        <authorList>
            <person name="Ferenci T."/>
            <person name="Zhou Z."/>
            <person name="Betteridge T."/>
            <person name="Ren Y."/>
            <person name="Liu Y."/>
            <person name="Feng L."/>
            <person name="Reeves P.R."/>
            <person name="Wang L."/>
        </authorList>
    </citation>
    <scope>NUCLEOTIDE SEQUENCE [LARGE SCALE GENOMIC DNA]</scope>
    <source>
        <strain>K12 / MC4100 / BW2952</strain>
    </source>
</reference>